<dbReference type="EMBL" id="AK128815">
    <property type="protein sequence ID" value="BAC87620.1"/>
    <property type="molecule type" value="mRNA"/>
</dbReference>
<dbReference type="EMBL" id="BC035849">
    <property type="protein sequence ID" value="AAH35849.1"/>
    <property type="molecule type" value="mRNA"/>
</dbReference>
<dbReference type="EMBL" id="BC066124">
    <property type="protein sequence ID" value="AAH66124.1"/>
    <property type="molecule type" value="mRNA"/>
</dbReference>
<dbReference type="EMBL" id="BC066775">
    <property type="protein sequence ID" value="AAH66775.1"/>
    <property type="molecule type" value="mRNA"/>
</dbReference>
<dbReference type="CCDS" id="CCDS12199.1">
    <molecule id="Q6NY19-2"/>
</dbReference>
<dbReference type="RefSeq" id="NP_940873.2">
    <molecule id="Q6NY19-2"/>
    <property type="nucleotide sequence ID" value="NM_198471.3"/>
</dbReference>
<dbReference type="RefSeq" id="XP_006722781.1">
    <molecule id="Q6NY19-2"/>
    <property type="nucleotide sequence ID" value="XM_006722718.5"/>
</dbReference>
<dbReference type="RefSeq" id="XP_011526186.1">
    <molecule id="Q6NY19-2"/>
    <property type="nucleotide sequence ID" value="XM_011527884.2"/>
</dbReference>
<dbReference type="SMR" id="Q6NY19"/>
<dbReference type="BioGRID" id="129185">
    <property type="interactions" value="7"/>
</dbReference>
<dbReference type="FunCoup" id="Q6NY19">
    <property type="interactions" value="98"/>
</dbReference>
<dbReference type="IntAct" id="Q6NY19">
    <property type="interactions" value="2"/>
</dbReference>
<dbReference type="STRING" id="9606.ENSP00000328923"/>
<dbReference type="GlyGen" id="Q6NY19">
    <property type="glycosylation" value="2 sites"/>
</dbReference>
<dbReference type="iPTMnet" id="Q6NY19"/>
<dbReference type="PhosphoSitePlus" id="Q6NY19"/>
<dbReference type="BioMuta" id="KANK3"/>
<dbReference type="DMDM" id="74749039"/>
<dbReference type="jPOST" id="Q6NY19"/>
<dbReference type="MassIVE" id="Q6NY19"/>
<dbReference type="PaxDb" id="9606-ENSP00000328923"/>
<dbReference type="PeptideAtlas" id="Q6NY19"/>
<dbReference type="ProteomicsDB" id="66779">
    <molecule id="Q6NY19-1"/>
</dbReference>
<dbReference type="ProteomicsDB" id="66780">
    <molecule id="Q6NY19-2"/>
</dbReference>
<dbReference type="Antibodypedia" id="42728">
    <property type="antibodies" value="53 antibodies from 17 providers"/>
</dbReference>
<dbReference type="DNASU" id="256949"/>
<dbReference type="Ensembl" id="ENST00000330915.7">
    <molecule id="Q6NY19-2"/>
    <property type="protein sequence ID" value="ENSP00000328923.2"/>
    <property type="gene ID" value="ENSG00000186994.12"/>
</dbReference>
<dbReference type="Ensembl" id="ENST00000593649.5">
    <molecule id="Q6NY19-1"/>
    <property type="protein sequence ID" value="ENSP00000470728.1"/>
    <property type="gene ID" value="ENSG00000186994.12"/>
</dbReference>
<dbReference type="GeneID" id="256949"/>
<dbReference type="KEGG" id="hsa:256949"/>
<dbReference type="MANE-Select" id="ENST00000330915.7">
    <property type="protein sequence ID" value="ENSP00000328923.2"/>
    <property type="RefSeq nucleotide sequence ID" value="NM_198471.3"/>
    <property type="RefSeq protein sequence ID" value="NP_940873.2"/>
</dbReference>
<dbReference type="UCSC" id="uc010dwa.3">
    <molecule id="Q6NY19-2"/>
    <property type="organism name" value="human"/>
</dbReference>
<dbReference type="AGR" id="HGNC:24796"/>
<dbReference type="CTD" id="256949"/>
<dbReference type="DisGeNET" id="256949"/>
<dbReference type="GeneCards" id="KANK3"/>
<dbReference type="HGNC" id="HGNC:24796">
    <property type="gene designation" value="KANK3"/>
</dbReference>
<dbReference type="HPA" id="ENSG00000186994">
    <property type="expression patterns" value="Low tissue specificity"/>
</dbReference>
<dbReference type="MIM" id="614611">
    <property type="type" value="gene"/>
</dbReference>
<dbReference type="neXtProt" id="NX_Q6NY19"/>
<dbReference type="OpenTargets" id="ENSG00000186994"/>
<dbReference type="PharmGKB" id="PA162392612"/>
<dbReference type="VEuPathDB" id="HostDB:ENSG00000186994"/>
<dbReference type="eggNOG" id="KOG0514">
    <property type="taxonomic scope" value="Eukaryota"/>
</dbReference>
<dbReference type="GeneTree" id="ENSGT00940000161178"/>
<dbReference type="HOGENOM" id="CLU_004269_2_0_1"/>
<dbReference type="InParanoid" id="Q6NY19"/>
<dbReference type="OMA" id="SDAWVTE"/>
<dbReference type="OrthoDB" id="5406014at2759"/>
<dbReference type="PAN-GO" id="Q6NY19">
    <property type="GO annotations" value="3 GO annotations based on evolutionary models"/>
</dbReference>
<dbReference type="PhylomeDB" id="Q6NY19"/>
<dbReference type="TreeFam" id="TF324499"/>
<dbReference type="PathwayCommons" id="Q6NY19"/>
<dbReference type="SignaLink" id="Q6NY19"/>
<dbReference type="BioGRID-ORCS" id="256949">
    <property type="hits" value="15 hits in 1147 CRISPR screens"/>
</dbReference>
<dbReference type="ChiTaRS" id="KANK3">
    <property type="organism name" value="human"/>
</dbReference>
<dbReference type="GenomeRNAi" id="256949"/>
<dbReference type="Pharos" id="Q6NY19">
    <property type="development level" value="Tdark"/>
</dbReference>
<dbReference type="PRO" id="PR:Q6NY19"/>
<dbReference type="Proteomes" id="UP000005640">
    <property type="component" value="Chromosome 19"/>
</dbReference>
<dbReference type="RNAct" id="Q6NY19">
    <property type="molecule type" value="protein"/>
</dbReference>
<dbReference type="Bgee" id="ENSG00000186994">
    <property type="expression patterns" value="Expressed in vena cava and 167 other cell types or tissues"/>
</dbReference>
<dbReference type="ExpressionAtlas" id="Q6NY19">
    <property type="expression patterns" value="baseline and differential"/>
</dbReference>
<dbReference type="GO" id="GO:0005737">
    <property type="term" value="C:cytoplasm"/>
    <property type="evidence" value="ECO:0000318"/>
    <property type="project" value="GO_Central"/>
</dbReference>
<dbReference type="GO" id="GO:0005856">
    <property type="term" value="C:cytoskeleton"/>
    <property type="evidence" value="ECO:0000318"/>
    <property type="project" value="GO_Central"/>
</dbReference>
<dbReference type="GO" id="GO:0030837">
    <property type="term" value="P:negative regulation of actin filament polymerization"/>
    <property type="evidence" value="ECO:0000318"/>
    <property type="project" value="GO_Central"/>
</dbReference>
<dbReference type="FunFam" id="1.25.40.20:FF:000160">
    <property type="entry name" value="KN motif and ankyrin repeat domain-containing protein 3"/>
    <property type="match status" value="1"/>
</dbReference>
<dbReference type="Gene3D" id="1.25.40.20">
    <property type="entry name" value="Ankyrin repeat-containing domain"/>
    <property type="match status" value="1"/>
</dbReference>
<dbReference type="InterPro" id="IPR002110">
    <property type="entry name" value="Ankyrin_rpt"/>
</dbReference>
<dbReference type="InterPro" id="IPR036770">
    <property type="entry name" value="Ankyrin_rpt-contain_sf"/>
</dbReference>
<dbReference type="InterPro" id="IPR047184">
    <property type="entry name" value="KANK1-4"/>
</dbReference>
<dbReference type="InterPro" id="IPR021939">
    <property type="entry name" value="KN_motif"/>
</dbReference>
<dbReference type="PANTHER" id="PTHR24168">
    <property type="entry name" value="KN MOTIF AND ANKYRIN REPEAT DOMAIN-CONTAINING"/>
    <property type="match status" value="1"/>
</dbReference>
<dbReference type="PANTHER" id="PTHR24168:SF23">
    <property type="entry name" value="KN MOTIF AND ANKYRIN REPEAT DOMAIN-CONTAINING PROTEIN 3"/>
    <property type="match status" value="1"/>
</dbReference>
<dbReference type="Pfam" id="PF12796">
    <property type="entry name" value="Ank_2"/>
    <property type="match status" value="2"/>
</dbReference>
<dbReference type="Pfam" id="PF12075">
    <property type="entry name" value="KN_motif"/>
    <property type="match status" value="1"/>
</dbReference>
<dbReference type="PRINTS" id="PR01415">
    <property type="entry name" value="ANKYRIN"/>
</dbReference>
<dbReference type="SMART" id="SM00248">
    <property type="entry name" value="ANK"/>
    <property type="match status" value="4"/>
</dbReference>
<dbReference type="SUPFAM" id="SSF48403">
    <property type="entry name" value="Ankyrin repeat"/>
    <property type="match status" value="1"/>
</dbReference>
<dbReference type="PROSITE" id="PS50297">
    <property type="entry name" value="ANK_REP_REGION"/>
    <property type="match status" value="1"/>
</dbReference>
<dbReference type="PROSITE" id="PS50088">
    <property type="entry name" value="ANK_REPEAT"/>
    <property type="match status" value="2"/>
</dbReference>
<evidence type="ECO:0000250" key="1">
    <source>
        <dbReference type="UniProtKB" id="Q9Z1P7"/>
    </source>
</evidence>
<evidence type="ECO:0000255" key="2"/>
<evidence type="ECO:0000256" key="3">
    <source>
        <dbReference type="SAM" id="MobiDB-lite"/>
    </source>
</evidence>
<evidence type="ECO:0000269" key="4">
    <source>
    </source>
</evidence>
<evidence type="ECO:0000269" key="5">
    <source>
    </source>
</evidence>
<evidence type="ECO:0000305" key="6"/>
<evidence type="ECO:0000312" key="7">
    <source>
        <dbReference type="HGNC" id="HGNC:24796"/>
    </source>
</evidence>
<evidence type="ECO:0007744" key="8">
    <source>
    </source>
</evidence>
<proteinExistence type="evidence at protein level"/>
<accession>Q6NY19</accession>
<accession>Q6NZI1</accession>
<accession>Q6ZQR3</accession>
<accession>Q8IUV2</accession>
<name>KANK3_HUMAN</name>
<protein>
    <recommendedName>
        <fullName evidence="6">KN motif and ankyrin repeat domain-containing protein 3</fullName>
    </recommendedName>
    <alternativeName>
        <fullName>Ankyrin repeat domain-containing protein 47</fullName>
    </alternativeName>
</protein>
<reference key="1">
    <citation type="journal article" date="2004" name="Nat. Genet.">
        <title>Complete sequencing and characterization of 21,243 full-length human cDNAs.</title>
        <authorList>
            <person name="Ota T."/>
            <person name="Suzuki Y."/>
            <person name="Nishikawa T."/>
            <person name="Otsuki T."/>
            <person name="Sugiyama T."/>
            <person name="Irie R."/>
            <person name="Wakamatsu A."/>
            <person name="Hayashi K."/>
            <person name="Sato H."/>
            <person name="Nagai K."/>
            <person name="Kimura K."/>
            <person name="Makita H."/>
            <person name="Sekine M."/>
            <person name="Obayashi M."/>
            <person name="Nishi T."/>
            <person name="Shibahara T."/>
            <person name="Tanaka T."/>
            <person name="Ishii S."/>
            <person name="Yamamoto J."/>
            <person name="Saito K."/>
            <person name="Kawai Y."/>
            <person name="Isono Y."/>
            <person name="Nakamura Y."/>
            <person name="Nagahari K."/>
            <person name="Murakami K."/>
            <person name="Yasuda T."/>
            <person name="Iwayanagi T."/>
            <person name="Wagatsuma M."/>
            <person name="Shiratori A."/>
            <person name="Sudo H."/>
            <person name="Hosoiri T."/>
            <person name="Kaku Y."/>
            <person name="Kodaira H."/>
            <person name="Kondo H."/>
            <person name="Sugawara M."/>
            <person name="Takahashi M."/>
            <person name="Kanda K."/>
            <person name="Yokoi T."/>
            <person name="Furuya T."/>
            <person name="Kikkawa E."/>
            <person name="Omura Y."/>
            <person name="Abe K."/>
            <person name="Kamihara K."/>
            <person name="Katsuta N."/>
            <person name="Sato K."/>
            <person name="Tanikawa M."/>
            <person name="Yamazaki M."/>
            <person name="Ninomiya K."/>
            <person name="Ishibashi T."/>
            <person name="Yamashita H."/>
            <person name="Murakawa K."/>
            <person name="Fujimori K."/>
            <person name="Tanai H."/>
            <person name="Kimata M."/>
            <person name="Watanabe M."/>
            <person name="Hiraoka S."/>
            <person name="Chiba Y."/>
            <person name="Ishida S."/>
            <person name="Ono Y."/>
            <person name="Takiguchi S."/>
            <person name="Watanabe S."/>
            <person name="Yosida M."/>
            <person name="Hotuta T."/>
            <person name="Kusano J."/>
            <person name="Kanehori K."/>
            <person name="Takahashi-Fujii A."/>
            <person name="Hara H."/>
            <person name="Tanase T.-O."/>
            <person name="Nomura Y."/>
            <person name="Togiya S."/>
            <person name="Komai F."/>
            <person name="Hara R."/>
            <person name="Takeuchi K."/>
            <person name="Arita M."/>
            <person name="Imose N."/>
            <person name="Musashino K."/>
            <person name="Yuuki H."/>
            <person name="Oshima A."/>
            <person name="Sasaki N."/>
            <person name="Aotsuka S."/>
            <person name="Yoshikawa Y."/>
            <person name="Matsunawa H."/>
            <person name="Ichihara T."/>
            <person name="Shiohata N."/>
            <person name="Sano S."/>
            <person name="Moriya S."/>
            <person name="Momiyama H."/>
            <person name="Satoh N."/>
            <person name="Takami S."/>
            <person name="Terashima Y."/>
            <person name="Suzuki O."/>
            <person name="Nakagawa S."/>
            <person name="Senoh A."/>
            <person name="Mizoguchi H."/>
            <person name="Goto Y."/>
            <person name="Shimizu F."/>
            <person name="Wakebe H."/>
            <person name="Hishigaki H."/>
            <person name="Watanabe T."/>
            <person name="Sugiyama A."/>
            <person name="Takemoto M."/>
            <person name="Kawakami B."/>
            <person name="Yamazaki M."/>
            <person name="Watanabe K."/>
            <person name="Kumagai A."/>
            <person name="Itakura S."/>
            <person name="Fukuzumi Y."/>
            <person name="Fujimori Y."/>
            <person name="Komiyama M."/>
            <person name="Tashiro H."/>
            <person name="Tanigami A."/>
            <person name="Fujiwara T."/>
            <person name="Ono T."/>
            <person name="Yamada K."/>
            <person name="Fujii Y."/>
            <person name="Ozaki K."/>
            <person name="Hirao M."/>
            <person name="Ohmori Y."/>
            <person name="Kawabata A."/>
            <person name="Hikiji T."/>
            <person name="Kobatake N."/>
            <person name="Inagaki H."/>
            <person name="Ikema Y."/>
            <person name="Okamoto S."/>
            <person name="Okitani R."/>
            <person name="Kawakami T."/>
            <person name="Noguchi S."/>
            <person name="Itoh T."/>
            <person name="Shigeta K."/>
            <person name="Senba T."/>
            <person name="Matsumura K."/>
            <person name="Nakajima Y."/>
            <person name="Mizuno T."/>
            <person name="Morinaga M."/>
            <person name="Sasaki M."/>
            <person name="Togashi T."/>
            <person name="Oyama M."/>
            <person name="Hata H."/>
            <person name="Watanabe M."/>
            <person name="Komatsu T."/>
            <person name="Mizushima-Sugano J."/>
            <person name="Satoh T."/>
            <person name="Shirai Y."/>
            <person name="Takahashi Y."/>
            <person name="Nakagawa K."/>
            <person name="Okumura K."/>
            <person name="Nagase T."/>
            <person name="Nomura N."/>
            <person name="Kikuchi H."/>
            <person name="Masuho Y."/>
            <person name="Yamashita R."/>
            <person name="Nakai K."/>
            <person name="Yada T."/>
            <person name="Nakamura Y."/>
            <person name="Ohara O."/>
            <person name="Isogai T."/>
            <person name="Sugano S."/>
        </authorList>
    </citation>
    <scope>NUCLEOTIDE SEQUENCE [LARGE SCALE MRNA] (ISOFORM 2)</scope>
    <scope>VARIANTS TYR-288 AND THR-485</scope>
    <source>
        <tissue>Mammary gland</tissue>
    </source>
</reference>
<reference key="2">
    <citation type="journal article" date="2004" name="Genome Res.">
        <title>The status, quality, and expansion of the NIH full-length cDNA project: the Mammalian Gene Collection (MGC).</title>
        <authorList>
            <consortium name="The MGC Project Team"/>
        </authorList>
    </citation>
    <scope>NUCLEOTIDE SEQUENCE [LARGE SCALE MRNA] (ISOFORMS 1 AND 2)</scope>
    <source>
        <tissue>Brain</tissue>
        <tissue>Placenta</tissue>
    </source>
</reference>
<reference key="3">
    <citation type="journal article" date="2008" name="Biochim. Biophys. Acta">
        <title>Kank proteins: a new family of ankyrin-repeat domain-containing proteins.</title>
        <authorList>
            <person name="Zhu Y."/>
            <person name="Kakinuma N."/>
            <person name="Wang Y."/>
            <person name="Kiyama R."/>
        </authorList>
    </citation>
    <scope>POSSIBLE FUNCTION</scope>
    <scope>TISSUE SPECIFICITY</scope>
</reference>
<reference key="4">
    <citation type="journal article" date="2014" name="J. Proteomics">
        <title>An enzyme assisted RP-RPLC approach for in-depth analysis of human liver phosphoproteome.</title>
        <authorList>
            <person name="Bian Y."/>
            <person name="Song C."/>
            <person name="Cheng K."/>
            <person name="Dong M."/>
            <person name="Wang F."/>
            <person name="Huang J."/>
            <person name="Sun D."/>
            <person name="Wang L."/>
            <person name="Ye M."/>
            <person name="Zou H."/>
        </authorList>
    </citation>
    <scope>PHOSPHORYLATION [LARGE SCALE ANALYSIS] AT SER-152; SER-167; SER-168; SER-177; SER-271 AND SER-293</scope>
    <scope>IDENTIFICATION BY MASS SPECTROMETRY [LARGE SCALE ANALYSIS]</scope>
    <source>
        <tissue>Liver</tissue>
    </source>
</reference>
<gene>
    <name evidence="7" type="primary">KANK3</name>
    <name type="synonym">ANKRD47</name>
</gene>
<feature type="chain" id="PRO_0000244582" description="KN motif and ankyrin repeat domain-containing protein 3">
    <location>
        <begin position="1"/>
        <end position="821"/>
    </location>
</feature>
<feature type="repeat" description="ANK 1">
    <location>
        <begin position="622"/>
        <end position="652"/>
    </location>
</feature>
<feature type="repeat" description="ANK 2">
    <location>
        <begin position="656"/>
        <end position="690"/>
    </location>
</feature>
<feature type="repeat" description="ANK 3">
    <location>
        <begin position="695"/>
        <end position="724"/>
    </location>
</feature>
<feature type="repeat" description="ANK 4">
    <location>
        <begin position="728"/>
        <end position="758"/>
    </location>
</feature>
<feature type="repeat" description="ANK 5">
    <location>
        <begin position="762"/>
        <end position="785"/>
    </location>
</feature>
<feature type="region of interest" description="Disordered" evidence="3">
    <location>
        <begin position="1"/>
        <end position="36"/>
    </location>
</feature>
<feature type="region of interest" description="Disordered" evidence="3">
    <location>
        <begin position="58"/>
        <end position="184"/>
    </location>
</feature>
<feature type="region of interest" description="Disordered" evidence="3">
    <location>
        <begin position="224"/>
        <end position="333"/>
    </location>
</feature>
<feature type="region of interest" description="Disordered" evidence="3">
    <location>
        <begin position="385"/>
        <end position="547"/>
    </location>
</feature>
<feature type="region of interest" description="Disordered" evidence="3">
    <location>
        <begin position="784"/>
        <end position="821"/>
    </location>
</feature>
<feature type="coiled-coil region" evidence="2">
    <location>
        <begin position="181"/>
        <end position="230"/>
    </location>
</feature>
<feature type="coiled-coil region" evidence="2">
    <location>
        <begin position="367"/>
        <end position="404"/>
    </location>
</feature>
<feature type="compositionally biased region" description="Polar residues" evidence="3">
    <location>
        <begin position="1"/>
        <end position="10"/>
    </location>
</feature>
<feature type="compositionally biased region" description="Low complexity" evidence="3">
    <location>
        <begin position="77"/>
        <end position="88"/>
    </location>
</feature>
<feature type="compositionally biased region" description="Basic and acidic residues" evidence="3">
    <location>
        <begin position="128"/>
        <end position="150"/>
    </location>
</feature>
<feature type="compositionally biased region" description="Low complexity" evidence="3">
    <location>
        <begin position="151"/>
        <end position="181"/>
    </location>
</feature>
<feature type="compositionally biased region" description="Basic and acidic residues" evidence="3">
    <location>
        <begin position="237"/>
        <end position="261"/>
    </location>
</feature>
<feature type="compositionally biased region" description="Low complexity" evidence="3">
    <location>
        <begin position="388"/>
        <end position="400"/>
    </location>
</feature>
<feature type="compositionally biased region" description="Low complexity" evidence="3">
    <location>
        <begin position="494"/>
        <end position="507"/>
    </location>
</feature>
<feature type="compositionally biased region" description="Polar residues" evidence="3">
    <location>
        <begin position="787"/>
        <end position="805"/>
    </location>
</feature>
<feature type="modified residue" description="Phosphoserine" evidence="8">
    <location>
        <position position="152"/>
    </location>
</feature>
<feature type="modified residue" description="Phosphoserine" evidence="1">
    <location>
        <position position="160"/>
    </location>
</feature>
<feature type="modified residue" description="Phosphoserine" evidence="1">
    <location>
        <position position="164"/>
    </location>
</feature>
<feature type="modified residue" description="Phosphoserine" evidence="8">
    <location>
        <position position="167"/>
    </location>
</feature>
<feature type="modified residue" description="Phosphoserine" evidence="8">
    <location>
        <position position="168"/>
    </location>
</feature>
<feature type="modified residue" description="Phosphoserine" evidence="8">
    <location>
        <position position="177"/>
    </location>
</feature>
<feature type="modified residue" description="Phosphoserine" evidence="8">
    <location>
        <position position="271"/>
    </location>
</feature>
<feature type="modified residue" description="Phosphoserine" evidence="1">
    <location>
        <position position="280"/>
    </location>
</feature>
<feature type="modified residue" description="Phosphoserine" evidence="8">
    <location>
        <position position="293"/>
    </location>
</feature>
<feature type="splice variant" id="VSP_061119" description="In isoform 1.">
    <original>SESPPGSQTATPGEGECGDNGENPQVQ</original>
    <variation>AGVQRHNLSSLQPPPPRFKKFSCLSLPSSWDYNSCEPSRLAQLTIF</variation>
    <location>
        <begin position="795"/>
        <end position="821"/>
    </location>
</feature>
<feature type="sequence variant" id="VAR_026909" description="In dbSNP:rs890850." evidence="4">
    <original>D</original>
    <variation>Y</variation>
    <location>
        <position position="288"/>
    </location>
</feature>
<feature type="sequence variant" id="VAR_026910" description="In dbSNP:rs890853.">
    <original>R</original>
    <variation>H</variation>
    <location>
        <position position="359"/>
    </location>
</feature>
<feature type="sequence variant" id="VAR_026911" description="In dbSNP:rs2913955." evidence="4">
    <original>A</original>
    <variation>T</variation>
    <location>
        <position position="485"/>
    </location>
</feature>
<organism>
    <name type="scientific">Homo sapiens</name>
    <name type="common">Human</name>
    <dbReference type="NCBI Taxonomy" id="9606"/>
    <lineage>
        <taxon>Eukaryota</taxon>
        <taxon>Metazoa</taxon>
        <taxon>Chordata</taxon>
        <taxon>Craniata</taxon>
        <taxon>Vertebrata</taxon>
        <taxon>Euteleostomi</taxon>
        <taxon>Mammalia</taxon>
        <taxon>Eutheria</taxon>
        <taxon>Euarchontoglires</taxon>
        <taxon>Primates</taxon>
        <taxon>Haplorrhini</taxon>
        <taxon>Catarrhini</taxon>
        <taxon>Hominidae</taxon>
        <taxon>Homo</taxon>
    </lineage>
</organism>
<keyword id="KW-0025">Alternative splicing</keyword>
<keyword id="KW-0040">ANK repeat</keyword>
<keyword id="KW-0175">Coiled coil</keyword>
<keyword id="KW-0597">Phosphoprotein</keyword>
<keyword id="KW-1267">Proteomics identification</keyword>
<keyword id="KW-1185">Reference proteome</keyword>
<keyword id="KW-0677">Repeat</keyword>
<sequence length="821" mass="85893">MAKFALNQNLPDLGGPRLCPVPAAGGARSPSSPYSVETPYGFHLDLDFLKYIEELERGPAARRAPGPPTSRRPRAPRPGLAGARSPGAWTSSESLASDDGGAPGILSQGAPSGLLMQPLSPRAPVRNPRVEHTLRETSRRLELAQTHERAPSPGRGVPRSPRGSGRSSPAPNLAPASPGPAQLQLVREQMAAALRRLRELEDQARTLPELQEQVRALRAEKARLLAGRAQPEPDGEAETRPDKLAQLRRLTERLATSERGGRARASPRADSPDGLAAGRSEGALQVLDGEVGSLDGTPQTREVAAEAVPETREAGAQAVPETREAGVEAAPETVEADAWVTEALLGLPAAAERELELLRASLEHQRGVSELLRGRLRELEEAREAAEEAAAGARAQLREATTQTPWSCAEKAAQTESPAEAPSLTQESSPGSMDGDRAVAPAGILKSIMKKRDGTPGAQPSSGPKSLQFVGVLNGEYESSSSEDASDSDGDSENGGAEPPGSSSGSGDDSGGGSDSGTPGPPSGGDIRDPEPEAEAEPQQVAQGRCELSPRLREACVALQRQLSRPRGVASDGGAVRLVAQEWFRVSSQRRSQAEPVARMLEGVRRLGPELLAHVVNLADGNGNTALHYSVSHGNLAIASLLLDTGACEVNRQNRAGYSALMLAALTSVRQEEEDMAVVQRLFCMGDVNAKASQTGQTALMLAISHGRQDMVATLLACGADVNAQDADGATALMCASEYGRLDTVRLLLTQPGCDPAILDNEGTSALAIALEAEQDEVAALLHAHLSSGQPDTQSESPPGSQTATPGEGECGDNGENPQVQ</sequence>
<comment type="function">
    <text>May be involved in the control of cytoskeleton formation by regulating actin polymerization.</text>
</comment>
<comment type="alternative products">
    <event type="alternative splicing"/>
    <isoform>
        <id>Q6NY19-2</id>
        <name>2</name>
        <sequence type="displayed"/>
    </isoform>
    <isoform>
        <id>Q6NY19-1</id>
        <name>1</name>
        <sequence type="described" ref="VSP_061119"/>
    </isoform>
</comment>
<comment type="tissue specificity">
    <text evidence="5">Strongly expressed in breast, liver, lung, skeletal muscle and kidney.</text>
</comment>